<organism>
    <name type="scientific">Phaeodactylum tricornutum</name>
    <name type="common">Diatom</name>
    <dbReference type="NCBI Taxonomy" id="2850"/>
    <lineage>
        <taxon>Eukaryota</taxon>
        <taxon>Sar</taxon>
        <taxon>Stramenopiles</taxon>
        <taxon>Ochrophyta</taxon>
        <taxon>Bacillariophyta</taxon>
        <taxon>Bacillariophyceae</taxon>
        <taxon>Bacillariophycidae</taxon>
        <taxon>Naviculales</taxon>
        <taxon>Phaeodactylaceae</taxon>
        <taxon>Phaeodactylum</taxon>
    </lineage>
</organism>
<gene>
    <name type="primary">FCPD</name>
</gene>
<protein>
    <recommendedName>
        <fullName>Fucoxanthin-chlorophyll a-c binding protein D, chloroplastic</fullName>
    </recommendedName>
</protein>
<proteinExistence type="inferred from homology"/>
<dbReference type="EMBL" id="Z24768">
    <property type="protein sequence ID" value="CAA80896.1"/>
    <property type="molecule type" value="Genomic_DNA"/>
</dbReference>
<dbReference type="PIR" id="S42133">
    <property type="entry name" value="S42133"/>
</dbReference>
<dbReference type="SMR" id="Q08587"/>
<dbReference type="HOGENOM" id="CLU_057943_4_1_1"/>
<dbReference type="GO" id="GO:0009535">
    <property type="term" value="C:chloroplast thylakoid membrane"/>
    <property type="evidence" value="ECO:0007669"/>
    <property type="project" value="UniProtKB-SubCell"/>
</dbReference>
<dbReference type="GO" id="GO:0030076">
    <property type="term" value="C:light-harvesting complex"/>
    <property type="evidence" value="ECO:0007669"/>
    <property type="project" value="UniProtKB-KW"/>
</dbReference>
<dbReference type="GO" id="GO:0009523">
    <property type="term" value="C:photosystem II"/>
    <property type="evidence" value="ECO:0007669"/>
    <property type="project" value="UniProtKB-KW"/>
</dbReference>
<dbReference type="GO" id="GO:0016168">
    <property type="term" value="F:chlorophyll binding"/>
    <property type="evidence" value="ECO:0007669"/>
    <property type="project" value="UniProtKB-KW"/>
</dbReference>
<dbReference type="GO" id="GO:0009765">
    <property type="term" value="P:photosynthesis, light harvesting"/>
    <property type="evidence" value="ECO:0007669"/>
    <property type="project" value="InterPro"/>
</dbReference>
<dbReference type="FunFam" id="1.10.3460.10:FF:000011">
    <property type="entry name" value="Fucoxanthin chlorophyll a/c protein 8"/>
    <property type="match status" value="1"/>
</dbReference>
<dbReference type="Gene3D" id="1.10.3460.10">
    <property type="entry name" value="Chlorophyll a/b binding protein domain"/>
    <property type="match status" value="1"/>
</dbReference>
<dbReference type="InterPro" id="IPR001344">
    <property type="entry name" value="Chloro_AB-bd_pln"/>
</dbReference>
<dbReference type="InterPro" id="IPR022796">
    <property type="entry name" value="Chloroa_b-bind"/>
</dbReference>
<dbReference type="PANTHER" id="PTHR21649">
    <property type="entry name" value="CHLOROPHYLL A/B BINDING PROTEIN"/>
    <property type="match status" value="1"/>
</dbReference>
<dbReference type="Pfam" id="PF00504">
    <property type="entry name" value="Chloroa_b-bind"/>
    <property type="match status" value="1"/>
</dbReference>
<dbReference type="SUPFAM" id="SSF103511">
    <property type="entry name" value="Chlorophyll a-b binding protein"/>
    <property type="match status" value="1"/>
</dbReference>
<evidence type="ECO:0000250" key="1"/>
<evidence type="ECO:0000305" key="2"/>
<name>FCPD_PHATR</name>
<feature type="transit peptide" description="Chloroplast" evidence="2">
    <location>
        <begin position="1"/>
        <end position="31"/>
    </location>
</feature>
<feature type="chain" id="PRO_0000021240" description="Fucoxanthin-chlorophyll a-c binding protein D, chloroplastic">
    <location>
        <begin position="32"/>
        <end position="197"/>
    </location>
</feature>
<feature type="transmembrane region" description="Helical" evidence="1">
    <location>
        <begin position="73"/>
        <end position="94"/>
    </location>
</feature>
<feature type="transmembrane region" description="Helical" evidence="1">
    <location>
        <begin position="114"/>
        <end position="133"/>
    </location>
</feature>
<feature type="transmembrane region" description="Helical" evidence="1">
    <location>
        <begin position="174"/>
        <end position="196"/>
    </location>
</feature>
<reference key="1">
    <citation type="journal article" date="1993" name="Nucleic Acids Res.">
        <title>Characterization of gene clusters encoding the fucoxanthin chlorophyll proteins of the diatom Phaeodactylum tricornutum.</title>
        <authorList>
            <person name="Bhaya D."/>
            <person name="Grossman A.R."/>
        </authorList>
    </citation>
    <scope>NUCLEOTIDE SEQUENCE [GENOMIC DNA]</scope>
    <source>
        <strain>UTEX 646 / Bohlin</strain>
    </source>
</reference>
<keyword id="KW-0148">Chlorophyll</keyword>
<keyword id="KW-0150">Chloroplast</keyword>
<keyword id="KW-0157">Chromophore</keyword>
<keyword id="KW-0437">Light-harvesting polypeptide</keyword>
<keyword id="KW-0472">Membrane</keyword>
<keyword id="KW-0602">Photosynthesis</keyword>
<keyword id="KW-0604">Photosystem II</keyword>
<keyword id="KW-0934">Plastid</keyword>
<keyword id="KW-0793">Thylakoid</keyword>
<keyword id="KW-0809">Transit peptide</keyword>
<keyword id="KW-0812">Transmembrane</keyword>
<keyword id="KW-1133">Transmembrane helix</keyword>
<sequence length="197" mass="21210">MKTAVIASLIAGAAAFAPAKNAARTSVATNMAFEDELGAQPPLGFFDPLGLVADGDQEKFDRLRYVEIKHGRISMLAVVGYLVQEAGVRLPGTIDYSGKTFAEIPSLAAFKEIPAGGLVQLLFFIGVLESSVMRDLTGEAEFVGDFRNGAIDFGWDTFDEETQFKKRAIELNQGRAAQMGILALMVHEQLGVSLLPQ</sequence>
<accession>Q08587</accession>
<comment type="function">
    <text>The light-harvesting complex (LHC) functions as a light receptor, it captures and delivers excitation energy to photosystems with which it is closely associated. Energy is transferred from the carotenoid and chlorophyll C (or B) to chlorophyll A and the photosynthetic reaction centers where it is used to synthesize ATP and reducing power.</text>
</comment>
<comment type="subunit">
    <text>The LHC complex of chromophytic algae is composed of fucoxanthin, chlorophyll A and C bound non-covalently by fucoxanthin chlorophyll proteins (FCPs). The ratio of the pigments in LHC; fucoxanthin: chlorophyll C: chlorophyll A; (0.6-1): (0.1-0.3): (1).</text>
</comment>
<comment type="subcellular location">
    <subcellularLocation>
        <location>Plastid</location>
        <location>Chloroplast thylakoid membrane</location>
        <topology>Multi-pass membrane protein</topology>
    </subcellularLocation>
    <text>FCPs are probably transported across the endoplasmic reticulum membranes that surround the plastid via a signal peptide, followed by translocation across the thylakoid membrane via a transit peptide.</text>
</comment>
<comment type="similarity">
    <text evidence="2">Belongs to the fucoxanthin chlorophyll protein family.</text>
</comment>